<accession>Q99LG2</accession>
<accession>Q8C0U9</accession>
<feature type="chain" id="PRO_0000120768" description="Transportin-2">
    <location>
        <begin position="1"/>
        <end position="887"/>
    </location>
</feature>
<feature type="repeat" description="HEAT 1" evidence="3">
    <location>
        <begin position="9"/>
        <end position="36"/>
    </location>
</feature>
<feature type="domain" description="Importin N-terminal">
    <location>
        <begin position="31"/>
        <end position="99"/>
    </location>
</feature>
<feature type="repeat" description="HEAT 2" evidence="3">
    <location>
        <begin position="41"/>
        <end position="79"/>
    </location>
</feature>
<feature type="repeat" description="HEAT 3" evidence="3">
    <location>
        <begin position="88"/>
        <end position="121"/>
    </location>
</feature>
<feature type="repeat" description="HEAT 4" evidence="3">
    <location>
        <begin position="127"/>
        <end position="164"/>
    </location>
</feature>
<feature type="repeat" description="HEAT 5" evidence="3">
    <location>
        <begin position="171"/>
        <end position="201"/>
    </location>
</feature>
<feature type="repeat" description="HEAT 6" evidence="3">
    <location>
        <begin position="214"/>
        <end position="241"/>
    </location>
</feature>
<feature type="repeat" description="HEAT 7" evidence="3">
    <location>
        <begin position="253"/>
        <end position="280"/>
    </location>
</feature>
<feature type="repeat" description="HEAT 8" evidence="3">
    <location>
        <begin position="296"/>
        <end position="386"/>
    </location>
</feature>
<feature type="repeat" description="HEAT 9" evidence="3">
    <location>
        <begin position="394"/>
        <end position="422"/>
    </location>
</feature>
<feature type="repeat" description="HEAT 10" evidence="3">
    <location>
        <begin position="434"/>
        <end position="461"/>
    </location>
</feature>
<feature type="repeat" description="HEAT 11" evidence="3">
    <location>
        <begin position="475"/>
        <end position="508"/>
    </location>
</feature>
<feature type="repeat" description="HEAT 12" evidence="3">
    <location>
        <begin position="516"/>
        <end position="549"/>
    </location>
</feature>
<feature type="repeat" description="HEAT 13" evidence="3">
    <location>
        <begin position="557"/>
        <end position="595"/>
    </location>
</feature>
<feature type="repeat" description="HEAT 14" evidence="3">
    <location>
        <begin position="603"/>
        <end position="654"/>
    </location>
</feature>
<feature type="repeat" description="HEAT 15" evidence="3">
    <location>
        <begin position="665"/>
        <end position="696"/>
    </location>
</feature>
<feature type="repeat" description="HEAT 16" evidence="3">
    <location>
        <begin position="704"/>
        <end position="737"/>
    </location>
</feature>
<feature type="repeat" description="HEAT 17" evidence="3">
    <location>
        <begin position="745"/>
        <end position="780"/>
    </location>
</feature>
<feature type="repeat" description="HEAT 18" evidence="3">
    <location>
        <begin position="788"/>
        <end position="821"/>
    </location>
</feature>
<feature type="repeat" description="HEAT 19" evidence="3">
    <location>
        <begin position="830"/>
        <end position="861"/>
    </location>
</feature>
<feature type="repeat" description="HEAT 20" evidence="3">
    <location>
        <begin position="864"/>
        <end position="884"/>
    </location>
</feature>
<feature type="region of interest" description="Disordered" evidence="4">
    <location>
        <begin position="344"/>
        <end position="363"/>
    </location>
</feature>
<feature type="modified residue" description="N6-acetyllysine" evidence="2">
    <location>
        <position position="852"/>
    </location>
</feature>
<feature type="sequence conflict" description="In Ref. 2; BAC26611." evidence="5" ref="2">
    <original>D</original>
    <variation>G</variation>
    <location>
        <position position="361"/>
    </location>
</feature>
<sequence>MDWQPDEQGLQQVLQLLKDSQSPNTATQRIVQDKLKQLNQFPDFNNYLIFVLTRLKSEDEPTRSLSGLILKNNVKAHYQSFPPPVADFIKQECLNNIGDASSLIRATIGILITTIASKGELQMWPELLPQLCNLLNSEDYNTCEGAFGALQKICEDSSELLDSDALNRPLNIMIPKFLQFFKHCSPKIRSHAIACVNQFIMDRAQALMDNIDTFIEHLFALAVDDDPEVRKNVCRALVMLLEVRIDRLIPHMHSIIQYMLQRTQDHDENVALEACEFWLTLAEQPICKEVLASHLVQLIPILVNGMKYSEIDIILLKGDVEEDEAVPDSEQDIKPRFHKSRTVTLTHEAERPDSSEDAEDDDDDDALSDWNLRKCSAAALDVLANVFREELLPHLLPLLKGLLFHPEWVVKESGILVLGAIAEGCMQGMVPYLPELIPHLIQCLSDKKALVRSIACWTLSRYAHWVVSQPPDMHLKPLMTELLKRILDGNKRVQEAACSAFATLEEEACTELVPYLSYILDTLVFAFGKYQHKNLLILYDAIGTLADSVGHHLNQPEYIQKLMPPLIQKWNELKDEDKDLFPLLECLSSVATALQSGFLPYCEPVYQRCVTLVQKTLAQAMMYTQHPEQYEAPDKDFMIVALDLLSGLAEGLGGHVEQLVARSNIMTLLFQCMQDSMPEVRQSSFALLGDLTKACFIHVKPCIAEFMPILGTNLNPEFISVCNNATWAIGEICMQMGAEMQPYVQMVLNNLVEIINRPNTPKTLLENTAITIGRLGYVCPQEVAPMLQQFIRPWCTSLRNIRDNEEKDSAFRGICMMIGVNPGGVVQDFIFFCDAVASWVSPKDDLRDMFYKILHGFKDQVGEENWQQFSEQFPPLLKERLAAFYGV</sequence>
<protein>
    <recommendedName>
        <fullName>Transportin-2</fullName>
    </recommendedName>
    <alternativeName>
        <fullName>Karyopherin beta-2b</fullName>
    </alternativeName>
</protein>
<keyword id="KW-0007">Acetylation</keyword>
<keyword id="KW-0963">Cytoplasm</keyword>
<keyword id="KW-0539">Nucleus</keyword>
<keyword id="KW-0653">Protein transport</keyword>
<keyword id="KW-1185">Reference proteome</keyword>
<keyword id="KW-0677">Repeat</keyword>
<keyword id="KW-0813">Transport</keyword>
<evidence type="ECO:0000250" key="1"/>
<evidence type="ECO:0000250" key="2">
    <source>
        <dbReference type="UniProtKB" id="O14787"/>
    </source>
</evidence>
<evidence type="ECO:0000250" key="3">
    <source>
        <dbReference type="UniProtKB" id="Q92973"/>
    </source>
</evidence>
<evidence type="ECO:0000256" key="4">
    <source>
        <dbReference type="SAM" id="MobiDB-lite"/>
    </source>
</evidence>
<evidence type="ECO:0000305" key="5"/>
<reference key="1">
    <citation type="journal article" date="2004" name="Genome Res.">
        <title>The status, quality, and expansion of the NIH full-length cDNA project: the Mammalian Gene Collection (MGC).</title>
        <authorList>
            <consortium name="The MGC Project Team"/>
        </authorList>
    </citation>
    <scope>NUCLEOTIDE SEQUENCE [LARGE SCALE MRNA]</scope>
</reference>
<reference key="2">
    <citation type="journal article" date="2005" name="Science">
        <title>The transcriptional landscape of the mammalian genome.</title>
        <authorList>
            <person name="Carninci P."/>
            <person name="Kasukawa T."/>
            <person name="Katayama S."/>
            <person name="Gough J."/>
            <person name="Frith M.C."/>
            <person name="Maeda N."/>
            <person name="Oyama R."/>
            <person name="Ravasi T."/>
            <person name="Lenhard B."/>
            <person name="Wells C."/>
            <person name="Kodzius R."/>
            <person name="Shimokawa K."/>
            <person name="Bajic V.B."/>
            <person name="Brenner S.E."/>
            <person name="Batalov S."/>
            <person name="Forrest A.R."/>
            <person name="Zavolan M."/>
            <person name="Davis M.J."/>
            <person name="Wilming L.G."/>
            <person name="Aidinis V."/>
            <person name="Allen J.E."/>
            <person name="Ambesi-Impiombato A."/>
            <person name="Apweiler R."/>
            <person name="Aturaliya R.N."/>
            <person name="Bailey T.L."/>
            <person name="Bansal M."/>
            <person name="Baxter L."/>
            <person name="Beisel K.W."/>
            <person name="Bersano T."/>
            <person name="Bono H."/>
            <person name="Chalk A.M."/>
            <person name="Chiu K.P."/>
            <person name="Choudhary V."/>
            <person name="Christoffels A."/>
            <person name="Clutterbuck D.R."/>
            <person name="Crowe M.L."/>
            <person name="Dalla E."/>
            <person name="Dalrymple B.P."/>
            <person name="de Bono B."/>
            <person name="Della Gatta G."/>
            <person name="di Bernardo D."/>
            <person name="Down T."/>
            <person name="Engstrom P."/>
            <person name="Fagiolini M."/>
            <person name="Faulkner G."/>
            <person name="Fletcher C.F."/>
            <person name="Fukushima T."/>
            <person name="Furuno M."/>
            <person name="Futaki S."/>
            <person name="Gariboldi M."/>
            <person name="Georgii-Hemming P."/>
            <person name="Gingeras T.R."/>
            <person name="Gojobori T."/>
            <person name="Green R.E."/>
            <person name="Gustincich S."/>
            <person name="Harbers M."/>
            <person name="Hayashi Y."/>
            <person name="Hensch T.K."/>
            <person name="Hirokawa N."/>
            <person name="Hill D."/>
            <person name="Huminiecki L."/>
            <person name="Iacono M."/>
            <person name="Ikeo K."/>
            <person name="Iwama A."/>
            <person name="Ishikawa T."/>
            <person name="Jakt M."/>
            <person name="Kanapin A."/>
            <person name="Katoh M."/>
            <person name="Kawasawa Y."/>
            <person name="Kelso J."/>
            <person name="Kitamura H."/>
            <person name="Kitano H."/>
            <person name="Kollias G."/>
            <person name="Krishnan S.P."/>
            <person name="Kruger A."/>
            <person name="Kummerfeld S.K."/>
            <person name="Kurochkin I.V."/>
            <person name="Lareau L.F."/>
            <person name="Lazarevic D."/>
            <person name="Lipovich L."/>
            <person name="Liu J."/>
            <person name="Liuni S."/>
            <person name="McWilliam S."/>
            <person name="Madan Babu M."/>
            <person name="Madera M."/>
            <person name="Marchionni L."/>
            <person name="Matsuda H."/>
            <person name="Matsuzawa S."/>
            <person name="Miki H."/>
            <person name="Mignone F."/>
            <person name="Miyake S."/>
            <person name="Morris K."/>
            <person name="Mottagui-Tabar S."/>
            <person name="Mulder N."/>
            <person name="Nakano N."/>
            <person name="Nakauchi H."/>
            <person name="Ng P."/>
            <person name="Nilsson R."/>
            <person name="Nishiguchi S."/>
            <person name="Nishikawa S."/>
            <person name="Nori F."/>
            <person name="Ohara O."/>
            <person name="Okazaki Y."/>
            <person name="Orlando V."/>
            <person name="Pang K.C."/>
            <person name="Pavan W.J."/>
            <person name="Pavesi G."/>
            <person name="Pesole G."/>
            <person name="Petrovsky N."/>
            <person name="Piazza S."/>
            <person name="Reed J."/>
            <person name="Reid J.F."/>
            <person name="Ring B.Z."/>
            <person name="Ringwald M."/>
            <person name="Rost B."/>
            <person name="Ruan Y."/>
            <person name="Salzberg S.L."/>
            <person name="Sandelin A."/>
            <person name="Schneider C."/>
            <person name="Schoenbach C."/>
            <person name="Sekiguchi K."/>
            <person name="Semple C.A."/>
            <person name="Seno S."/>
            <person name="Sessa L."/>
            <person name="Sheng Y."/>
            <person name="Shibata Y."/>
            <person name="Shimada H."/>
            <person name="Shimada K."/>
            <person name="Silva D."/>
            <person name="Sinclair B."/>
            <person name="Sperling S."/>
            <person name="Stupka E."/>
            <person name="Sugiura K."/>
            <person name="Sultana R."/>
            <person name="Takenaka Y."/>
            <person name="Taki K."/>
            <person name="Tammoja K."/>
            <person name="Tan S.L."/>
            <person name="Tang S."/>
            <person name="Taylor M.S."/>
            <person name="Tegner J."/>
            <person name="Teichmann S.A."/>
            <person name="Ueda H.R."/>
            <person name="van Nimwegen E."/>
            <person name="Verardo R."/>
            <person name="Wei C.L."/>
            <person name="Yagi K."/>
            <person name="Yamanishi H."/>
            <person name="Zabarovsky E."/>
            <person name="Zhu S."/>
            <person name="Zimmer A."/>
            <person name="Hide W."/>
            <person name="Bult C."/>
            <person name="Grimmond S.M."/>
            <person name="Teasdale R.D."/>
            <person name="Liu E.T."/>
            <person name="Brusic V."/>
            <person name="Quackenbush J."/>
            <person name="Wahlestedt C."/>
            <person name="Mattick J.S."/>
            <person name="Hume D.A."/>
            <person name="Kai C."/>
            <person name="Sasaki D."/>
            <person name="Tomaru Y."/>
            <person name="Fukuda S."/>
            <person name="Kanamori-Katayama M."/>
            <person name="Suzuki M."/>
            <person name="Aoki J."/>
            <person name="Arakawa T."/>
            <person name="Iida J."/>
            <person name="Imamura K."/>
            <person name="Itoh M."/>
            <person name="Kato T."/>
            <person name="Kawaji H."/>
            <person name="Kawagashira N."/>
            <person name="Kawashima T."/>
            <person name="Kojima M."/>
            <person name="Kondo S."/>
            <person name="Konno H."/>
            <person name="Nakano K."/>
            <person name="Ninomiya N."/>
            <person name="Nishio T."/>
            <person name="Okada M."/>
            <person name="Plessy C."/>
            <person name="Shibata K."/>
            <person name="Shiraki T."/>
            <person name="Suzuki S."/>
            <person name="Tagami M."/>
            <person name="Waki K."/>
            <person name="Watahiki A."/>
            <person name="Okamura-Oho Y."/>
            <person name="Suzuki H."/>
            <person name="Kawai J."/>
            <person name="Hayashizaki Y."/>
        </authorList>
    </citation>
    <scope>NUCLEOTIDE SEQUENCE [LARGE SCALE MRNA] OF 331-887</scope>
    <source>
        <strain>C57BL/6J</strain>
        <tissue>Testis</tissue>
    </source>
</reference>
<reference key="3">
    <citation type="journal article" date="2010" name="Cell">
        <title>A tissue-specific atlas of mouse protein phosphorylation and expression.</title>
        <authorList>
            <person name="Huttlin E.L."/>
            <person name="Jedrychowski M.P."/>
            <person name="Elias J.E."/>
            <person name="Goswami T."/>
            <person name="Rad R."/>
            <person name="Beausoleil S.A."/>
            <person name="Villen J."/>
            <person name="Haas W."/>
            <person name="Sowa M.E."/>
            <person name="Gygi S.P."/>
        </authorList>
    </citation>
    <scope>IDENTIFICATION BY MASS SPECTROMETRY [LARGE SCALE ANALYSIS]</scope>
    <source>
        <tissue>Brain</tissue>
        <tissue>Brown adipose tissue</tissue>
        <tissue>Heart</tissue>
        <tissue>Kidney</tissue>
        <tissue>Liver</tissue>
        <tissue>Lung</tissue>
        <tissue>Pancreas</tissue>
        <tissue>Spleen</tissue>
        <tissue>Testis</tissue>
    </source>
</reference>
<gene>
    <name type="primary">Tnpo2</name>
</gene>
<dbReference type="EMBL" id="BC003275">
    <property type="protein sequence ID" value="AAH03275.1"/>
    <property type="molecule type" value="mRNA"/>
</dbReference>
<dbReference type="EMBL" id="AK029774">
    <property type="protein sequence ID" value="BAC26611.1"/>
    <property type="molecule type" value="mRNA"/>
</dbReference>
<dbReference type="CCDS" id="CCDS90431.1"/>
<dbReference type="RefSeq" id="NP_001116315.1">
    <property type="nucleotide sequence ID" value="NM_001122843.1"/>
</dbReference>
<dbReference type="RefSeq" id="NP_001350961.1">
    <property type="nucleotide sequence ID" value="NM_001364032.1"/>
</dbReference>
<dbReference type="RefSeq" id="NP_001350962.1">
    <property type="nucleotide sequence ID" value="NM_001364033.1"/>
</dbReference>
<dbReference type="RefSeq" id="NP_001350963.1">
    <property type="nucleotide sequence ID" value="NM_001364034.1"/>
</dbReference>
<dbReference type="RefSeq" id="NP_663365.3">
    <property type="nucleotide sequence ID" value="NM_145390.4"/>
</dbReference>
<dbReference type="RefSeq" id="XP_011246644.1">
    <property type="nucleotide sequence ID" value="XM_011248342.4"/>
</dbReference>
<dbReference type="RefSeq" id="XP_011246647.1">
    <property type="nucleotide sequence ID" value="XM_011248345.2"/>
</dbReference>
<dbReference type="RefSeq" id="XP_017168136.1">
    <property type="nucleotide sequence ID" value="XM_017312647.1"/>
</dbReference>
<dbReference type="RefSeq" id="XP_017168137.1">
    <property type="nucleotide sequence ID" value="XM_017312648.1"/>
</dbReference>
<dbReference type="RefSeq" id="XP_036009758.1">
    <property type="nucleotide sequence ID" value="XM_036153865.1"/>
</dbReference>
<dbReference type="SMR" id="Q99LG2"/>
<dbReference type="BioGRID" id="229382">
    <property type="interactions" value="5"/>
</dbReference>
<dbReference type="FunCoup" id="Q99LG2">
    <property type="interactions" value="5374"/>
</dbReference>
<dbReference type="STRING" id="10090.ENSMUSP00000133076"/>
<dbReference type="GlyGen" id="Q99LG2">
    <property type="glycosylation" value="1 site, 1 O-linked glycan (1 site)"/>
</dbReference>
<dbReference type="iPTMnet" id="Q99LG2"/>
<dbReference type="PhosphoSitePlus" id="Q99LG2"/>
<dbReference type="SwissPalm" id="Q99LG2"/>
<dbReference type="jPOST" id="Q99LG2"/>
<dbReference type="PaxDb" id="10090-ENSMUSP00000133076"/>
<dbReference type="PeptideAtlas" id="Q99LG2"/>
<dbReference type="ProteomicsDB" id="259607"/>
<dbReference type="Pumba" id="Q99LG2"/>
<dbReference type="Antibodypedia" id="26113">
    <property type="antibodies" value="90 antibodies from 19 providers"/>
</dbReference>
<dbReference type="DNASU" id="212999"/>
<dbReference type="Ensembl" id="ENSMUST00000211601.2">
    <property type="protein sequence ID" value="ENSMUSP00000147583.2"/>
    <property type="gene ID" value="ENSMUSG00000031691.15"/>
</dbReference>
<dbReference type="GeneID" id="212999"/>
<dbReference type="KEGG" id="mmu:212999"/>
<dbReference type="UCSC" id="uc009mpa.2">
    <property type="organism name" value="mouse"/>
</dbReference>
<dbReference type="AGR" id="MGI:2384849"/>
<dbReference type="CTD" id="30000"/>
<dbReference type="MGI" id="MGI:2384849">
    <property type="gene designation" value="Tnpo2"/>
</dbReference>
<dbReference type="VEuPathDB" id="HostDB:ENSMUSG00000031691"/>
<dbReference type="eggNOG" id="KOG2023">
    <property type="taxonomic scope" value="Eukaryota"/>
</dbReference>
<dbReference type="GeneTree" id="ENSGT00940000156708"/>
<dbReference type="InParanoid" id="Q99LG2"/>
<dbReference type="OrthoDB" id="951172at2759"/>
<dbReference type="PhylomeDB" id="Q99LG2"/>
<dbReference type="BioGRID-ORCS" id="212999">
    <property type="hits" value="5 hits in 79 CRISPR screens"/>
</dbReference>
<dbReference type="ChiTaRS" id="Tnpo2">
    <property type="organism name" value="mouse"/>
</dbReference>
<dbReference type="PRO" id="PR:Q99LG2"/>
<dbReference type="Proteomes" id="UP000000589">
    <property type="component" value="Chromosome 8"/>
</dbReference>
<dbReference type="RNAct" id="Q99LG2">
    <property type="molecule type" value="protein"/>
</dbReference>
<dbReference type="Bgee" id="ENSMUSG00000031691">
    <property type="expression patterns" value="Expressed in perirhinal cortex and 224 other cell types or tissues"/>
</dbReference>
<dbReference type="ExpressionAtlas" id="Q99LG2">
    <property type="expression patterns" value="baseline and differential"/>
</dbReference>
<dbReference type="GO" id="GO:0005737">
    <property type="term" value="C:cytoplasm"/>
    <property type="evidence" value="ECO:0007669"/>
    <property type="project" value="UniProtKB-SubCell"/>
</dbReference>
<dbReference type="GO" id="GO:0005634">
    <property type="term" value="C:nucleus"/>
    <property type="evidence" value="ECO:0007669"/>
    <property type="project" value="UniProtKB-SubCell"/>
</dbReference>
<dbReference type="GO" id="GO:0031267">
    <property type="term" value="F:small GTPase binding"/>
    <property type="evidence" value="ECO:0007669"/>
    <property type="project" value="InterPro"/>
</dbReference>
<dbReference type="GO" id="GO:0051148">
    <property type="term" value="P:negative regulation of muscle cell differentiation"/>
    <property type="evidence" value="ECO:0000315"/>
    <property type="project" value="MGI"/>
</dbReference>
<dbReference type="GO" id="GO:0006606">
    <property type="term" value="P:protein import into nucleus"/>
    <property type="evidence" value="ECO:0000315"/>
    <property type="project" value="MGI"/>
</dbReference>
<dbReference type="Gene3D" id="1.25.10.10">
    <property type="entry name" value="Leucine-rich Repeat Variant"/>
    <property type="match status" value="1"/>
</dbReference>
<dbReference type="InterPro" id="IPR011989">
    <property type="entry name" value="ARM-like"/>
</dbReference>
<dbReference type="InterPro" id="IPR016024">
    <property type="entry name" value="ARM-type_fold"/>
</dbReference>
<dbReference type="InterPro" id="IPR000357">
    <property type="entry name" value="HEAT"/>
</dbReference>
<dbReference type="InterPro" id="IPR001494">
    <property type="entry name" value="Importin-beta_N"/>
</dbReference>
<dbReference type="InterPro" id="IPR040122">
    <property type="entry name" value="Importin_beta"/>
</dbReference>
<dbReference type="PANTHER" id="PTHR10527">
    <property type="entry name" value="IMPORTIN BETA"/>
    <property type="match status" value="1"/>
</dbReference>
<dbReference type="Pfam" id="PF02985">
    <property type="entry name" value="HEAT"/>
    <property type="match status" value="2"/>
</dbReference>
<dbReference type="Pfam" id="PF13513">
    <property type="entry name" value="HEAT_EZ"/>
    <property type="match status" value="1"/>
</dbReference>
<dbReference type="Pfam" id="PF03810">
    <property type="entry name" value="IBN_N"/>
    <property type="match status" value="1"/>
</dbReference>
<dbReference type="SMART" id="SM00913">
    <property type="entry name" value="IBN_N"/>
    <property type="match status" value="1"/>
</dbReference>
<dbReference type="SUPFAM" id="SSF48371">
    <property type="entry name" value="ARM repeat"/>
    <property type="match status" value="1"/>
</dbReference>
<organism>
    <name type="scientific">Mus musculus</name>
    <name type="common">Mouse</name>
    <dbReference type="NCBI Taxonomy" id="10090"/>
    <lineage>
        <taxon>Eukaryota</taxon>
        <taxon>Metazoa</taxon>
        <taxon>Chordata</taxon>
        <taxon>Craniata</taxon>
        <taxon>Vertebrata</taxon>
        <taxon>Euteleostomi</taxon>
        <taxon>Mammalia</taxon>
        <taxon>Eutheria</taxon>
        <taxon>Euarchontoglires</taxon>
        <taxon>Glires</taxon>
        <taxon>Rodentia</taxon>
        <taxon>Myomorpha</taxon>
        <taxon>Muroidea</taxon>
        <taxon>Muridae</taxon>
        <taxon>Murinae</taxon>
        <taxon>Mus</taxon>
        <taxon>Mus</taxon>
    </lineage>
</organism>
<name>TNPO2_MOUSE</name>
<comment type="function">
    <text evidence="1">Probably functions in nuclear protein import as nuclear transport receptor. Serves as receptor for nuclear localization signals (NLS) in cargo substrates. Is thought to mediate docking of the importin/substrate complex to the nuclear pore complex (NPC) through binding to nucleoporin and the complex is subsequently translocated through the pore by an energy requiring, Ran-dependent mechanism. At the nucleoplasmic side of the NPC, Ran binds to the importin, the importin/substrate complex dissociates and importin is re-exported from the nucleus to the cytoplasm where GTP hydrolysis releases Ran. The directionality of nuclear import is thought to be conferred by an asymmetric distribution of the GTP- and GDP-bound forms of Ran between the cytoplasm and nucleus (By similarity).</text>
</comment>
<comment type="subcellular location">
    <subcellularLocation>
        <location evidence="1">Cytoplasm</location>
    </subcellularLocation>
    <subcellularLocation>
        <location evidence="1">Nucleus</location>
    </subcellularLocation>
</comment>
<comment type="similarity">
    <text evidence="5">Belongs to the importin beta family. Importin beta-2 subfamily.</text>
</comment>
<proteinExistence type="evidence at protein level"/>